<feature type="chain" id="PRO_0000312937" description="Serine/threonine-protein kinase ssn3">
    <location>
        <begin position="1"/>
        <end position="435"/>
    </location>
</feature>
<feature type="domain" description="Protein kinase" evidence="2">
    <location>
        <begin position="49"/>
        <end position="377"/>
    </location>
</feature>
<feature type="region of interest" description="Disordered" evidence="4">
    <location>
        <begin position="398"/>
        <end position="435"/>
    </location>
</feature>
<feature type="compositionally biased region" description="Basic and acidic residues" evidence="4">
    <location>
        <begin position="398"/>
        <end position="407"/>
    </location>
</feature>
<feature type="active site" description="Proton acceptor" evidence="2 3">
    <location>
        <position position="181"/>
    </location>
</feature>
<feature type="binding site" evidence="2">
    <location>
        <begin position="55"/>
        <end position="63"/>
    </location>
    <ligand>
        <name>ATP</name>
        <dbReference type="ChEBI" id="CHEBI:30616"/>
    </ligand>
</feature>
<feature type="binding site" evidence="2">
    <location>
        <position position="79"/>
    </location>
    <ligand>
        <name>ATP</name>
        <dbReference type="ChEBI" id="CHEBI:30616"/>
    </ligand>
</feature>
<sequence>MYGRNFPFFNSLGGFYPRGNGFPLDAPSLDPRKPSGTGYTSKVRVRDKYRIVGFISSGTYGRVYKAIGKNGEKREFAIKKFKPDKEGEIIQYTGLSQSAIREMSLCSELDHPNVVQLEEIILEDKCIFMVFEYTEHDLLQIIHHHTQPQRHAIPAPMVRSILFQLLNGLLYLHTNWVLHRDLKPANILVTSSGAIRVGDLGLARLFYKPLNSLFSGDKVVVTIWYRAPELLMGSRHYTPAVDLWAVGCIFAELLSLRPIFKGEEAKMDSKKTVPFQRNQMMKIIEIMGLPTKEIWPGITSMPEFSQLQSLAMSRAPHFNRSSNLENWYQSCLKNGGYSANSSAGTPGADGFDLLSRLLEYDPTKRITAREALEHPYFKNGGPISANCFEGFEGKYPHRRVTQDDNDIRSGSLPGTKRSGLPDDSLMGRASKRIKE</sequence>
<comment type="function">
    <text evidence="1">Component of the srb8-11 complex. The srb8-11 complex is a regulatory module of the Mediator complex which is itself involved in regulation of basal and activated RNA polymerase II-dependent transcription. The srb8-11 complex may be involved in the transcriptional repression of a subset of genes regulated by Mediator. It may inhibit the association of the Mediator complex with RNA polymerase II to form the holoenzyme complex. The srb8-11 complex phosphorylates the C-terminal domain (CTD) of the largest subunit of RNA polymerase II (By similarity).</text>
</comment>
<comment type="catalytic activity">
    <reaction>
        <text>L-seryl-[protein] + ATP = O-phospho-L-seryl-[protein] + ADP + H(+)</text>
        <dbReference type="Rhea" id="RHEA:17989"/>
        <dbReference type="Rhea" id="RHEA-COMP:9863"/>
        <dbReference type="Rhea" id="RHEA-COMP:11604"/>
        <dbReference type="ChEBI" id="CHEBI:15378"/>
        <dbReference type="ChEBI" id="CHEBI:29999"/>
        <dbReference type="ChEBI" id="CHEBI:30616"/>
        <dbReference type="ChEBI" id="CHEBI:83421"/>
        <dbReference type="ChEBI" id="CHEBI:456216"/>
        <dbReference type="EC" id="2.7.11.22"/>
    </reaction>
</comment>
<comment type="catalytic activity">
    <reaction>
        <text>L-threonyl-[protein] + ATP = O-phospho-L-threonyl-[protein] + ADP + H(+)</text>
        <dbReference type="Rhea" id="RHEA:46608"/>
        <dbReference type="Rhea" id="RHEA-COMP:11060"/>
        <dbReference type="Rhea" id="RHEA-COMP:11605"/>
        <dbReference type="ChEBI" id="CHEBI:15378"/>
        <dbReference type="ChEBI" id="CHEBI:30013"/>
        <dbReference type="ChEBI" id="CHEBI:30616"/>
        <dbReference type="ChEBI" id="CHEBI:61977"/>
        <dbReference type="ChEBI" id="CHEBI:456216"/>
        <dbReference type="EC" id="2.7.11.22"/>
    </reaction>
</comment>
<comment type="catalytic activity">
    <reaction>
        <text>[DNA-directed RNA polymerase] + ATP = phospho-[DNA-directed RNA polymerase] + ADP + H(+)</text>
        <dbReference type="Rhea" id="RHEA:10216"/>
        <dbReference type="Rhea" id="RHEA-COMP:11321"/>
        <dbReference type="Rhea" id="RHEA-COMP:11322"/>
        <dbReference type="ChEBI" id="CHEBI:15378"/>
        <dbReference type="ChEBI" id="CHEBI:30616"/>
        <dbReference type="ChEBI" id="CHEBI:43176"/>
        <dbReference type="ChEBI" id="CHEBI:68546"/>
        <dbReference type="ChEBI" id="CHEBI:456216"/>
        <dbReference type="EC" id="2.7.11.23"/>
    </reaction>
</comment>
<comment type="cofactor">
    <cofactor evidence="1">
        <name>Mg(2+)</name>
        <dbReference type="ChEBI" id="CHEBI:18420"/>
    </cofactor>
</comment>
<comment type="subunit">
    <text evidence="1">Component of the srb8-11 complex, a regulatory module of the Mediator complex.</text>
</comment>
<comment type="subcellular location">
    <subcellularLocation>
        <location evidence="5">Nucleus</location>
    </subcellularLocation>
</comment>
<comment type="similarity">
    <text evidence="5">Belongs to the protein kinase superfamily. CMGC Ser/Thr protein kinase family. CDC2/CDKX subfamily.</text>
</comment>
<keyword id="KW-0010">Activator</keyword>
<keyword id="KW-0067">ATP-binding</keyword>
<keyword id="KW-0418">Kinase</keyword>
<keyword id="KW-0460">Magnesium</keyword>
<keyword id="KW-0479">Metal-binding</keyword>
<keyword id="KW-0547">Nucleotide-binding</keyword>
<keyword id="KW-0539">Nucleus</keyword>
<keyword id="KW-1185">Reference proteome</keyword>
<keyword id="KW-0678">Repressor</keyword>
<keyword id="KW-0723">Serine/threonine-protein kinase</keyword>
<keyword id="KW-0804">Transcription</keyword>
<keyword id="KW-0805">Transcription regulation</keyword>
<keyword id="KW-0808">Transferase</keyword>
<proteinExistence type="inferred from homology"/>
<reference key="1">
    <citation type="submission" date="2005-09" db="EMBL/GenBank/DDBJ databases">
        <title>Annotation of the Aspergillus terreus NIH2624 genome.</title>
        <authorList>
            <person name="Birren B.W."/>
            <person name="Lander E.S."/>
            <person name="Galagan J.E."/>
            <person name="Nusbaum C."/>
            <person name="Devon K."/>
            <person name="Henn M."/>
            <person name="Ma L.-J."/>
            <person name="Jaffe D.B."/>
            <person name="Butler J."/>
            <person name="Alvarez P."/>
            <person name="Gnerre S."/>
            <person name="Grabherr M."/>
            <person name="Kleber M."/>
            <person name="Mauceli E.W."/>
            <person name="Brockman W."/>
            <person name="Rounsley S."/>
            <person name="Young S.K."/>
            <person name="LaButti K."/>
            <person name="Pushparaj V."/>
            <person name="DeCaprio D."/>
            <person name="Crawford M."/>
            <person name="Koehrsen M."/>
            <person name="Engels R."/>
            <person name="Montgomery P."/>
            <person name="Pearson M."/>
            <person name="Howarth C."/>
            <person name="Larson L."/>
            <person name="Luoma S."/>
            <person name="White J."/>
            <person name="Alvarado L."/>
            <person name="Kodira C.D."/>
            <person name="Zeng Q."/>
            <person name="Oleary S."/>
            <person name="Yandava C."/>
            <person name="Denning D.W."/>
            <person name="Nierman W.C."/>
            <person name="Milne T."/>
            <person name="Madden K."/>
        </authorList>
    </citation>
    <scope>NUCLEOTIDE SEQUENCE [LARGE SCALE GENOMIC DNA]</scope>
    <source>
        <strain>NIH 2624 / FGSC A1156</strain>
    </source>
</reference>
<dbReference type="EC" id="2.7.11.22"/>
<dbReference type="EC" id="2.7.11.23"/>
<dbReference type="EMBL" id="CH476598">
    <property type="protein sequence ID" value="EAU35835.1"/>
    <property type="molecule type" value="Genomic_DNA"/>
</dbReference>
<dbReference type="RefSeq" id="XP_001213211.1">
    <property type="nucleotide sequence ID" value="XM_001213211.1"/>
</dbReference>
<dbReference type="SMR" id="Q0CQK1"/>
<dbReference type="STRING" id="341663.Q0CQK1"/>
<dbReference type="EnsemblFungi" id="EAU35835">
    <property type="protein sequence ID" value="EAU35835"/>
    <property type="gene ID" value="ATEG_04033"/>
</dbReference>
<dbReference type="GeneID" id="4318303"/>
<dbReference type="VEuPathDB" id="FungiDB:ATEG_04033"/>
<dbReference type="eggNOG" id="KOG0666">
    <property type="taxonomic scope" value="Eukaryota"/>
</dbReference>
<dbReference type="HOGENOM" id="CLU_000288_181_6_1"/>
<dbReference type="OMA" id="YFKNGGP"/>
<dbReference type="OrthoDB" id="6284126at2759"/>
<dbReference type="Proteomes" id="UP000007963">
    <property type="component" value="Unassembled WGS sequence"/>
</dbReference>
<dbReference type="GO" id="GO:1990508">
    <property type="term" value="C:CKM complex"/>
    <property type="evidence" value="ECO:0007669"/>
    <property type="project" value="EnsemblFungi"/>
</dbReference>
<dbReference type="GO" id="GO:0016592">
    <property type="term" value="C:mediator complex"/>
    <property type="evidence" value="ECO:0007669"/>
    <property type="project" value="EnsemblFungi"/>
</dbReference>
<dbReference type="GO" id="GO:0005524">
    <property type="term" value="F:ATP binding"/>
    <property type="evidence" value="ECO:0007669"/>
    <property type="project" value="UniProtKB-KW"/>
</dbReference>
<dbReference type="GO" id="GO:0004693">
    <property type="term" value="F:cyclin-dependent protein serine/threonine kinase activity"/>
    <property type="evidence" value="ECO:0007669"/>
    <property type="project" value="UniProtKB-EC"/>
</dbReference>
<dbReference type="GO" id="GO:0046872">
    <property type="term" value="F:metal ion binding"/>
    <property type="evidence" value="ECO:0007669"/>
    <property type="project" value="UniProtKB-KW"/>
</dbReference>
<dbReference type="GO" id="GO:0106310">
    <property type="term" value="F:protein serine kinase activity"/>
    <property type="evidence" value="ECO:0007669"/>
    <property type="project" value="RHEA"/>
</dbReference>
<dbReference type="GO" id="GO:0008353">
    <property type="term" value="F:RNA polymerase II CTD heptapeptide repeat kinase activity"/>
    <property type="evidence" value="ECO:0007669"/>
    <property type="project" value="UniProtKB-EC"/>
</dbReference>
<dbReference type="GO" id="GO:0060258">
    <property type="term" value="P:negative regulation of filamentous growth"/>
    <property type="evidence" value="ECO:0007669"/>
    <property type="project" value="EnsemblFungi"/>
</dbReference>
<dbReference type="GO" id="GO:0000122">
    <property type="term" value="P:negative regulation of transcription by RNA polymerase II"/>
    <property type="evidence" value="ECO:0007669"/>
    <property type="project" value="EnsemblFungi"/>
</dbReference>
<dbReference type="GO" id="GO:0070481">
    <property type="term" value="P:nuclear-transcribed mRNA catabolic process, non-stop decay"/>
    <property type="evidence" value="ECO:0007669"/>
    <property type="project" value="EnsemblFungi"/>
</dbReference>
<dbReference type="GO" id="GO:0045944">
    <property type="term" value="P:positive regulation of transcription by RNA polymerase II"/>
    <property type="evidence" value="ECO:0007669"/>
    <property type="project" value="EnsemblFungi"/>
</dbReference>
<dbReference type="GO" id="GO:0031648">
    <property type="term" value="P:protein destabilization"/>
    <property type="evidence" value="ECO:0007669"/>
    <property type="project" value="EnsemblFungi"/>
</dbReference>
<dbReference type="CDD" id="cd07842">
    <property type="entry name" value="STKc_CDK8_like"/>
    <property type="match status" value="1"/>
</dbReference>
<dbReference type="FunFam" id="1.10.510.10:FF:000408">
    <property type="entry name" value="Serine/threonine-protein kinase SSN3"/>
    <property type="match status" value="1"/>
</dbReference>
<dbReference type="FunFam" id="3.30.200.20:FF:000426">
    <property type="entry name" value="Serine/threonine-protein kinase ssn3"/>
    <property type="match status" value="1"/>
</dbReference>
<dbReference type="Gene3D" id="3.30.200.20">
    <property type="entry name" value="Phosphorylase Kinase, domain 1"/>
    <property type="match status" value="1"/>
</dbReference>
<dbReference type="Gene3D" id="1.10.510.10">
    <property type="entry name" value="Transferase(Phosphotransferase) domain 1"/>
    <property type="match status" value="1"/>
</dbReference>
<dbReference type="InterPro" id="IPR050108">
    <property type="entry name" value="CDK"/>
</dbReference>
<dbReference type="InterPro" id="IPR011009">
    <property type="entry name" value="Kinase-like_dom_sf"/>
</dbReference>
<dbReference type="InterPro" id="IPR000719">
    <property type="entry name" value="Prot_kinase_dom"/>
</dbReference>
<dbReference type="InterPro" id="IPR008271">
    <property type="entry name" value="Ser/Thr_kinase_AS"/>
</dbReference>
<dbReference type="PANTHER" id="PTHR24056">
    <property type="entry name" value="CELL DIVISION PROTEIN KINASE"/>
    <property type="match status" value="1"/>
</dbReference>
<dbReference type="PANTHER" id="PTHR24056:SF495">
    <property type="entry name" value="CYCLIN-DEPENDENT KINASE 8-RELATED"/>
    <property type="match status" value="1"/>
</dbReference>
<dbReference type="Pfam" id="PF00069">
    <property type="entry name" value="Pkinase"/>
    <property type="match status" value="1"/>
</dbReference>
<dbReference type="SMART" id="SM00220">
    <property type="entry name" value="S_TKc"/>
    <property type="match status" value="1"/>
</dbReference>
<dbReference type="SUPFAM" id="SSF56112">
    <property type="entry name" value="Protein kinase-like (PK-like)"/>
    <property type="match status" value="1"/>
</dbReference>
<dbReference type="PROSITE" id="PS50011">
    <property type="entry name" value="PROTEIN_KINASE_DOM"/>
    <property type="match status" value="1"/>
</dbReference>
<dbReference type="PROSITE" id="PS00108">
    <property type="entry name" value="PROTEIN_KINASE_ST"/>
    <property type="match status" value="1"/>
</dbReference>
<organism>
    <name type="scientific">Aspergillus terreus (strain NIH 2624 / FGSC A1156)</name>
    <dbReference type="NCBI Taxonomy" id="341663"/>
    <lineage>
        <taxon>Eukaryota</taxon>
        <taxon>Fungi</taxon>
        <taxon>Dikarya</taxon>
        <taxon>Ascomycota</taxon>
        <taxon>Pezizomycotina</taxon>
        <taxon>Eurotiomycetes</taxon>
        <taxon>Eurotiomycetidae</taxon>
        <taxon>Eurotiales</taxon>
        <taxon>Aspergillaceae</taxon>
        <taxon>Aspergillus</taxon>
        <taxon>Aspergillus subgen. Circumdati</taxon>
    </lineage>
</organism>
<protein>
    <recommendedName>
        <fullName>Serine/threonine-protein kinase ssn3</fullName>
        <ecNumber>2.7.11.22</ecNumber>
        <ecNumber>2.7.11.23</ecNumber>
    </recommendedName>
    <alternativeName>
        <fullName>Cyclin-dependent kinase 8</fullName>
    </alternativeName>
</protein>
<evidence type="ECO:0000250" key="1"/>
<evidence type="ECO:0000255" key="2">
    <source>
        <dbReference type="PROSITE-ProRule" id="PRU00159"/>
    </source>
</evidence>
<evidence type="ECO:0000255" key="3">
    <source>
        <dbReference type="PROSITE-ProRule" id="PRU10027"/>
    </source>
</evidence>
<evidence type="ECO:0000256" key="4">
    <source>
        <dbReference type="SAM" id="MobiDB-lite"/>
    </source>
</evidence>
<evidence type="ECO:0000305" key="5"/>
<name>SSN3_ASPTN</name>
<accession>Q0CQK1</accession>
<gene>
    <name type="primary">ssn3</name>
    <name type="synonym">cdk8</name>
    <name type="ORF">ATEG_04033</name>
</gene>